<proteinExistence type="evidence at protein level"/>
<dbReference type="EMBL" id="AJ315148">
    <property type="protein sequence ID" value="CAC86202.1"/>
    <property type="molecule type" value="Genomic_DNA"/>
</dbReference>
<dbReference type="EMBL" id="AE006468">
    <property type="protein sequence ID" value="AAL22484.1"/>
    <property type="molecule type" value="Genomic_DNA"/>
</dbReference>
<dbReference type="RefSeq" id="WP_000192026.1">
    <property type="nucleotide sequence ID" value="NC_003197.2"/>
</dbReference>
<dbReference type="PDB" id="5OJH">
    <property type="method" value="X-ray"/>
    <property type="resolution" value="1.55 A"/>
    <property type="chains" value="A=185-559"/>
</dbReference>
<dbReference type="PDB" id="5OLT">
    <property type="method" value="X-ray"/>
    <property type="resolution" value="1.45 A"/>
    <property type="chains" value="A=185-559"/>
</dbReference>
<dbReference type="PDBsum" id="5OJH"/>
<dbReference type="PDBsum" id="5OLT"/>
<dbReference type="SMR" id="Q7CPI7"/>
<dbReference type="STRING" id="99287.STM3624"/>
<dbReference type="PaxDb" id="99287-STM3624"/>
<dbReference type="KEGG" id="stm:STM3624"/>
<dbReference type="PATRIC" id="fig|99287.12.peg.3831"/>
<dbReference type="HOGENOM" id="CLU_024049_0_0_6"/>
<dbReference type="OMA" id="GDKMQMS"/>
<dbReference type="PhylomeDB" id="Q7CPI7"/>
<dbReference type="BioCyc" id="SENT99287:STM3624-MONOMER"/>
<dbReference type="Proteomes" id="UP000001014">
    <property type="component" value="Chromosome"/>
</dbReference>
<dbReference type="GO" id="GO:0005886">
    <property type="term" value="C:plasma membrane"/>
    <property type="evidence" value="ECO:0007669"/>
    <property type="project" value="UniProtKB-SubCell"/>
</dbReference>
<dbReference type="GO" id="GO:0030244">
    <property type="term" value="P:cellulose biosynthetic process"/>
    <property type="evidence" value="ECO:0007669"/>
    <property type="project" value="UniProtKB-KW"/>
</dbReference>
<dbReference type="InterPro" id="IPR017744">
    <property type="entry name" value="BcsG"/>
</dbReference>
<dbReference type="NCBIfam" id="TIGR03368">
    <property type="entry name" value="cellulose_yhjU"/>
    <property type="match status" value="1"/>
</dbReference>
<dbReference type="Pfam" id="PF11658">
    <property type="entry name" value="CBP_BcsG"/>
    <property type="match status" value="1"/>
</dbReference>
<sequence>MTQHTQTPSMPSPLWQYWRGLSGWNFYFLVKFGLLWAGYLNFHPLLNLVFMAFLLMPIPKYRLHRLRHWIAIPVGFALFWHDTWLPGPQSIMSQGTQVAEFSSGYLLDLIARFINWQMIGAIFVLLVAWLFLSQWIRVTVFVVAIMVWLNVLTLTGPVFTLWPAGQPTDTVTTTGGNAAATVATAGDKPVIGDMPAQTAPPTTANLNAWLNTFYAAEEKRKTTFPAQLPPDAQPFDLLVINICSLSWSDVEAAGLMSHPLWSHFDILFKHFNSGTSYSGPAAIRLLRASCGQPSHTRLYQPANNECYLFDNLAKLGFTQHLMMDHNGEFGGFLKEVRENGGMQSELMNQSGLPTALLSFDGSPVYDDLAVLNRWLTGEEREANSRSATFFNLLPLHDGNHFPGVSKTADYKIRAQKLFDELDAFFTELEKSGRKVMVVVVPEHGGALKGDRMQISGLRDIPSPSITNVPAGVKFFGMKAPHEGAPIDINQPSSYLAISELVVRAVDGKLFTEDSVNWNKLTSNLPQTAPVSENANAVVIQYQGKPYVRLNGGDWVPYPQ</sequence>
<comment type="function">
    <text evidence="2">Required for cellulose biosynthesis.</text>
</comment>
<comment type="subcellular location">
    <subcellularLocation>
        <location evidence="3">Cell membrane</location>
        <topology evidence="3">Multi-pass membrane protein</topology>
    </subcellularLocation>
</comment>
<name>BCSG_SALTY</name>
<feature type="chain" id="PRO_0000417575" description="Cellulose biosynthesis protein BcsG">
    <location>
        <begin position="1"/>
        <end position="559"/>
    </location>
</feature>
<feature type="transmembrane region" description="Helical" evidence="1">
    <location>
        <begin position="34"/>
        <end position="54"/>
    </location>
</feature>
<feature type="transmembrane region" description="Helical" evidence="1">
    <location>
        <begin position="68"/>
        <end position="88"/>
    </location>
</feature>
<feature type="transmembrane region" description="Helical" evidence="1">
    <location>
        <begin position="113"/>
        <end position="133"/>
    </location>
</feature>
<feature type="transmembrane region" description="Helical" evidence="1">
    <location>
        <begin position="139"/>
        <end position="159"/>
    </location>
</feature>
<feature type="helix" evidence="5">
    <location>
        <begin position="203"/>
        <end position="218"/>
    </location>
</feature>
<feature type="strand" evidence="5">
    <location>
        <begin position="236"/>
        <end position="244"/>
    </location>
</feature>
<feature type="helix" evidence="5">
    <location>
        <begin position="247"/>
        <end position="252"/>
    </location>
</feature>
<feature type="helix" evidence="5">
    <location>
        <begin position="260"/>
        <end position="263"/>
    </location>
</feature>
<feature type="strand" evidence="5">
    <location>
        <begin position="265"/>
        <end position="272"/>
    </location>
</feature>
<feature type="helix" evidence="5">
    <location>
        <begin position="278"/>
        <end position="286"/>
    </location>
</feature>
<feature type="turn" evidence="5">
    <location>
        <begin position="287"/>
        <end position="289"/>
    </location>
</feature>
<feature type="helix" evidence="5">
    <location>
        <begin position="295"/>
        <end position="298"/>
    </location>
</feature>
<feature type="helix" evidence="5">
    <location>
        <begin position="304"/>
        <end position="306"/>
    </location>
</feature>
<feature type="helix" evidence="5">
    <location>
        <begin position="308"/>
        <end position="314"/>
    </location>
</feature>
<feature type="strand" evidence="5">
    <location>
        <begin position="318"/>
        <end position="325"/>
    </location>
</feature>
<feature type="helix" evidence="5">
    <location>
        <begin position="329"/>
        <end position="331"/>
    </location>
</feature>
<feature type="helix" evidence="5">
    <location>
        <begin position="332"/>
        <end position="338"/>
    </location>
</feature>
<feature type="strand" evidence="5">
    <location>
        <begin position="354"/>
        <end position="357"/>
    </location>
</feature>
<feature type="strand" evidence="5">
    <location>
        <begin position="363"/>
        <end position="365"/>
    </location>
</feature>
<feature type="helix" evidence="5">
    <location>
        <begin position="367"/>
        <end position="379"/>
    </location>
</feature>
<feature type="strand" evidence="5">
    <location>
        <begin position="386"/>
        <end position="392"/>
    </location>
</feature>
<feature type="helix" evidence="5">
    <location>
        <begin position="410"/>
        <end position="431"/>
    </location>
</feature>
<feature type="strand" evidence="5">
    <location>
        <begin position="435"/>
        <end position="443"/>
    </location>
</feature>
<feature type="strand" evidence="5">
    <location>
        <begin position="451"/>
        <end position="453"/>
    </location>
</feature>
<feature type="helix" evidence="5">
    <location>
        <begin position="463"/>
        <end position="466"/>
    </location>
</feature>
<feature type="strand" evidence="5">
    <location>
        <begin position="467"/>
        <end position="476"/>
    </location>
</feature>
<feature type="strand" evidence="5">
    <location>
        <begin position="486"/>
        <end position="488"/>
    </location>
</feature>
<feature type="helix" evidence="5">
    <location>
        <begin position="494"/>
        <end position="504"/>
    </location>
</feature>
<feature type="helix" evidence="5">
    <location>
        <begin position="508"/>
        <end position="510"/>
    </location>
</feature>
<feature type="helix" evidence="5">
    <location>
        <begin position="517"/>
        <end position="521"/>
    </location>
</feature>
<feature type="strand" evidence="5">
    <location>
        <begin position="531"/>
        <end position="533"/>
    </location>
</feature>
<feature type="strand" evidence="5">
    <location>
        <begin position="536"/>
        <end position="541"/>
    </location>
</feature>
<feature type="strand" evidence="5">
    <location>
        <begin position="544"/>
        <end position="549"/>
    </location>
</feature>
<feature type="strand" evidence="4">
    <location>
        <begin position="554"/>
        <end position="556"/>
    </location>
</feature>
<accession>Q7CPI7</accession>
<accession>Q7AY56</accession>
<organism>
    <name type="scientific">Salmonella typhimurium (strain LT2 / SGSC1412 / ATCC 700720)</name>
    <dbReference type="NCBI Taxonomy" id="99287"/>
    <lineage>
        <taxon>Bacteria</taxon>
        <taxon>Pseudomonadati</taxon>
        <taxon>Pseudomonadota</taxon>
        <taxon>Gammaproteobacteria</taxon>
        <taxon>Enterobacterales</taxon>
        <taxon>Enterobacteriaceae</taxon>
        <taxon>Salmonella</taxon>
    </lineage>
</organism>
<protein>
    <recommendedName>
        <fullName>Cellulose biosynthesis protein BcsG</fullName>
    </recommendedName>
</protein>
<keyword id="KW-0002">3D-structure</keyword>
<keyword id="KW-1003">Cell membrane</keyword>
<keyword id="KW-0135">Cellulose biosynthesis</keyword>
<keyword id="KW-0472">Membrane</keyword>
<keyword id="KW-1185">Reference proteome</keyword>
<keyword id="KW-0812">Transmembrane</keyword>
<keyword id="KW-1133">Transmembrane helix</keyword>
<gene>
    <name type="primary">bcsG</name>
    <name type="ordered locus">STM3624</name>
</gene>
<evidence type="ECO:0000255" key="1"/>
<evidence type="ECO:0000269" key="2">
    <source>
    </source>
</evidence>
<evidence type="ECO:0000305" key="3"/>
<evidence type="ECO:0007829" key="4">
    <source>
        <dbReference type="PDB" id="5OJH"/>
    </source>
</evidence>
<evidence type="ECO:0007829" key="5">
    <source>
        <dbReference type="PDB" id="5OLT"/>
    </source>
</evidence>
<reference key="1">
    <citation type="journal article" date="2002" name="Mol. Microbiol.">
        <title>Genetic analysis of Salmonella enteritidis biofilm formation: critical role of cellulose.</title>
        <authorList>
            <person name="Solano C."/>
            <person name="Garcia B."/>
            <person name="Valle J."/>
            <person name="Berasain C."/>
            <person name="Ghigo J.-M."/>
            <person name="Gamazo C."/>
            <person name="Lasa I."/>
        </authorList>
    </citation>
    <scope>NUCLEOTIDE SEQUENCE [GENOMIC DNA]</scope>
    <scope>FUNCTION</scope>
    <scope>GENE NAME</scope>
    <source>
        <strain>LT2</strain>
    </source>
</reference>
<reference key="2">
    <citation type="journal article" date="2001" name="Nature">
        <title>Complete genome sequence of Salmonella enterica serovar Typhimurium LT2.</title>
        <authorList>
            <person name="McClelland M."/>
            <person name="Sanderson K.E."/>
            <person name="Spieth J."/>
            <person name="Clifton S.W."/>
            <person name="Latreille P."/>
            <person name="Courtney L."/>
            <person name="Porwollik S."/>
            <person name="Ali J."/>
            <person name="Dante M."/>
            <person name="Du F."/>
            <person name="Hou S."/>
            <person name="Layman D."/>
            <person name="Leonard S."/>
            <person name="Nguyen C."/>
            <person name="Scott K."/>
            <person name="Holmes A."/>
            <person name="Grewal N."/>
            <person name="Mulvaney E."/>
            <person name="Ryan E."/>
            <person name="Sun H."/>
            <person name="Florea L."/>
            <person name="Miller W."/>
            <person name="Stoneking T."/>
            <person name="Nhan M."/>
            <person name="Waterston R."/>
            <person name="Wilson R.K."/>
        </authorList>
    </citation>
    <scope>NUCLEOTIDE SEQUENCE [LARGE SCALE GENOMIC DNA]</scope>
    <source>
        <strain>LT2 / SGSC1412 / ATCC 700720</strain>
    </source>
</reference>